<reference key="1">
    <citation type="journal article" date="1994" name="Genetics">
        <title>The Drosophila molybdenum cofactor gene cinnamon is homologous to three Escherichia coli cofactor proteins and to the rat protein gephyrin.</title>
        <authorList>
            <person name="Kamdar K.P."/>
            <person name="Shelton M.E."/>
            <person name="Finnerty V."/>
        </authorList>
    </citation>
    <scope>NUCLEOTIDE SEQUENCE [MRNA]</scope>
</reference>
<reference key="2">
    <citation type="journal article" date="2000" name="Science">
        <title>The genome sequence of Drosophila melanogaster.</title>
        <authorList>
            <person name="Adams M.D."/>
            <person name="Celniker S.E."/>
            <person name="Holt R.A."/>
            <person name="Evans C.A."/>
            <person name="Gocayne J.D."/>
            <person name="Amanatides P.G."/>
            <person name="Scherer S.E."/>
            <person name="Li P.W."/>
            <person name="Hoskins R.A."/>
            <person name="Galle R.F."/>
            <person name="George R.A."/>
            <person name="Lewis S.E."/>
            <person name="Richards S."/>
            <person name="Ashburner M."/>
            <person name="Henderson S.N."/>
            <person name="Sutton G.G."/>
            <person name="Wortman J.R."/>
            <person name="Yandell M.D."/>
            <person name="Zhang Q."/>
            <person name="Chen L.X."/>
            <person name="Brandon R.C."/>
            <person name="Rogers Y.-H.C."/>
            <person name="Blazej R.G."/>
            <person name="Champe M."/>
            <person name="Pfeiffer B.D."/>
            <person name="Wan K.H."/>
            <person name="Doyle C."/>
            <person name="Baxter E.G."/>
            <person name="Helt G."/>
            <person name="Nelson C.R."/>
            <person name="Miklos G.L.G."/>
            <person name="Abril J.F."/>
            <person name="Agbayani A."/>
            <person name="An H.-J."/>
            <person name="Andrews-Pfannkoch C."/>
            <person name="Baldwin D."/>
            <person name="Ballew R.M."/>
            <person name="Basu A."/>
            <person name="Baxendale J."/>
            <person name="Bayraktaroglu L."/>
            <person name="Beasley E.M."/>
            <person name="Beeson K.Y."/>
            <person name="Benos P.V."/>
            <person name="Berman B.P."/>
            <person name="Bhandari D."/>
            <person name="Bolshakov S."/>
            <person name="Borkova D."/>
            <person name="Botchan M.R."/>
            <person name="Bouck J."/>
            <person name="Brokstein P."/>
            <person name="Brottier P."/>
            <person name="Burtis K.C."/>
            <person name="Busam D.A."/>
            <person name="Butler H."/>
            <person name="Cadieu E."/>
            <person name="Center A."/>
            <person name="Chandra I."/>
            <person name="Cherry J.M."/>
            <person name="Cawley S."/>
            <person name="Dahlke C."/>
            <person name="Davenport L.B."/>
            <person name="Davies P."/>
            <person name="de Pablos B."/>
            <person name="Delcher A."/>
            <person name="Deng Z."/>
            <person name="Mays A.D."/>
            <person name="Dew I."/>
            <person name="Dietz S.M."/>
            <person name="Dodson K."/>
            <person name="Doup L.E."/>
            <person name="Downes M."/>
            <person name="Dugan-Rocha S."/>
            <person name="Dunkov B.C."/>
            <person name="Dunn P."/>
            <person name="Durbin K.J."/>
            <person name="Evangelista C.C."/>
            <person name="Ferraz C."/>
            <person name="Ferriera S."/>
            <person name="Fleischmann W."/>
            <person name="Fosler C."/>
            <person name="Gabrielian A.E."/>
            <person name="Garg N.S."/>
            <person name="Gelbart W.M."/>
            <person name="Glasser K."/>
            <person name="Glodek A."/>
            <person name="Gong F."/>
            <person name="Gorrell J.H."/>
            <person name="Gu Z."/>
            <person name="Guan P."/>
            <person name="Harris M."/>
            <person name="Harris N.L."/>
            <person name="Harvey D.A."/>
            <person name="Heiman T.J."/>
            <person name="Hernandez J.R."/>
            <person name="Houck J."/>
            <person name="Hostin D."/>
            <person name="Houston K.A."/>
            <person name="Howland T.J."/>
            <person name="Wei M.-H."/>
            <person name="Ibegwam C."/>
            <person name="Jalali M."/>
            <person name="Kalush F."/>
            <person name="Karpen G.H."/>
            <person name="Ke Z."/>
            <person name="Kennison J.A."/>
            <person name="Ketchum K.A."/>
            <person name="Kimmel B.E."/>
            <person name="Kodira C.D."/>
            <person name="Kraft C.L."/>
            <person name="Kravitz S."/>
            <person name="Kulp D."/>
            <person name="Lai Z."/>
            <person name="Lasko P."/>
            <person name="Lei Y."/>
            <person name="Levitsky A.A."/>
            <person name="Li J.H."/>
            <person name="Li Z."/>
            <person name="Liang Y."/>
            <person name="Lin X."/>
            <person name="Liu X."/>
            <person name="Mattei B."/>
            <person name="McIntosh T.C."/>
            <person name="McLeod M.P."/>
            <person name="McPherson D."/>
            <person name="Merkulov G."/>
            <person name="Milshina N.V."/>
            <person name="Mobarry C."/>
            <person name="Morris J."/>
            <person name="Moshrefi A."/>
            <person name="Mount S.M."/>
            <person name="Moy M."/>
            <person name="Murphy B."/>
            <person name="Murphy L."/>
            <person name="Muzny D.M."/>
            <person name="Nelson D.L."/>
            <person name="Nelson D.R."/>
            <person name="Nelson K.A."/>
            <person name="Nixon K."/>
            <person name="Nusskern D.R."/>
            <person name="Pacleb J.M."/>
            <person name="Palazzolo M."/>
            <person name="Pittman G.S."/>
            <person name="Pan S."/>
            <person name="Pollard J."/>
            <person name="Puri V."/>
            <person name="Reese M.G."/>
            <person name="Reinert K."/>
            <person name="Remington K."/>
            <person name="Saunders R.D.C."/>
            <person name="Scheeler F."/>
            <person name="Shen H."/>
            <person name="Shue B.C."/>
            <person name="Siden-Kiamos I."/>
            <person name="Simpson M."/>
            <person name="Skupski M.P."/>
            <person name="Smith T.J."/>
            <person name="Spier E."/>
            <person name="Spradling A.C."/>
            <person name="Stapleton M."/>
            <person name="Strong R."/>
            <person name="Sun E."/>
            <person name="Svirskas R."/>
            <person name="Tector C."/>
            <person name="Turner R."/>
            <person name="Venter E."/>
            <person name="Wang A.H."/>
            <person name="Wang X."/>
            <person name="Wang Z.-Y."/>
            <person name="Wassarman D.A."/>
            <person name="Weinstock G.M."/>
            <person name="Weissenbach J."/>
            <person name="Williams S.M."/>
            <person name="Woodage T."/>
            <person name="Worley K.C."/>
            <person name="Wu D."/>
            <person name="Yang S."/>
            <person name="Yao Q.A."/>
            <person name="Ye J."/>
            <person name="Yeh R.-F."/>
            <person name="Zaveri J.S."/>
            <person name="Zhan M."/>
            <person name="Zhang G."/>
            <person name="Zhao Q."/>
            <person name="Zheng L."/>
            <person name="Zheng X.H."/>
            <person name="Zhong F.N."/>
            <person name="Zhong W."/>
            <person name="Zhou X."/>
            <person name="Zhu S.C."/>
            <person name="Zhu X."/>
            <person name="Smith H.O."/>
            <person name="Gibbs R.A."/>
            <person name="Myers E.W."/>
            <person name="Rubin G.M."/>
            <person name="Venter J.C."/>
        </authorList>
    </citation>
    <scope>NUCLEOTIDE SEQUENCE [LARGE SCALE GENOMIC DNA]</scope>
    <source>
        <strain>Berkeley</strain>
    </source>
</reference>
<reference key="3">
    <citation type="journal article" date="1999" name="Mol. Gen. Genet.">
        <title>The Drosophila cinnamon gene is functionally homologous to Arabidopsis cnx1 and has a similar expression pattern to the mammalian gephyrin gene.</title>
        <authorList>
            <person name="Wittle A.E."/>
            <person name="Kamdar K.P."/>
            <person name="Finnerty V."/>
        </authorList>
    </citation>
    <scope>FUNCTION</scope>
    <scope>DEVELOPMENTAL STAGE</scope>
    <source>
        <strain>Canton-S</strain>
    </source>
</reference>
<reference key="4">
    <citation type="journal article" date="2002" name="Genome Biol.">
        <title>Annotation of the Drosophila melanogaster euchromatic genome: a systematic review.</title>
        <authorList>
            <person name="Misra S."/>
            <person name="Crosby M.A."/>
            <person name="Mungall C.J."/>
            <person name="Matthews B.B."/>
            <person name="Campbell K.S."/>
            <person name="Hradecky P."/>
            <person name="Huang Y."/>
            <person name="Kaminker J.S."/>
            <person name="Millburn G.H."/>
            <person name="Prochnik S.E."/>
            <person name="Smith C.D."/>
            <person name="Tupy J.L."/>
            <person name="Whitfield E.J."/>
            <person name="Bayraktaroglu L."/>
            <person name="Berman B.P."/>
            <person name="Bettencourt B.R."/>
            <person name="Celniker S.E."/>
            <person name="de Grey A.D.N.J."/>
            <person name="Drysdale R.A."/>
            <person name="Harris N.L."/>
            <person name="Richter J."/>
            <person name="Russo S."/>
            <person name="Schroeder A.J."/>
            <person name="Shu S.Q."/>
            <person name="Stapleton M."/>
            <person name="Yamada C."/>
            <person name="Ashburner M."/>
            <person name="Gelbart W.M."/>
            <person name="Rubin G.M."/>
            <person name="Lewis S.E."/>
        </authorList>
    </citation>
    <scope>GENOME REANNOTATION</scope>
    <source>
        <strain>Berkeley</strain>
    </source>
</reference>
<reference key="5">
    <citation type="journal article" date="2000" name="Science">
        <title>From sequence to chromosome: the tip of the X chromosome of D. melanogaster.</title>
        <authorList>
            <person name="Benos P.V."/>
            <person name="Gatt M.K."/>
            <person name="Ashburner M."/>
            <person name="Murphy L."/>
            <person name="Harris D."/>
            <person name="Barrell B.G."/>
            <person name="Ferraz C."/>
            <person name="Vidal S."/>
            <person name="Brun C."/>
            <person name="Demailles J."/>
            <person name="Cadieu E."/>
            <person name="Dreano S."/>
            <person name="Gloux S."/>
            <person name="Lelaure V."/>
            <person name="Mottier S."/>
            <person name="Galibert F."/>
            <person name="Borkova D."/>
            <person name="Minana B."/>
            <person name="Kafatos F.C."/>
            <person name="Louis C."/>
            <person name="Siden-Kiamos I."/>
            <person name="Bolshakov S."/>
            <person name="Papagiannakis G."/>
            <person name="Spanos L."/>
            <person name="Cox S."/>
            <person name="Madueno E."/>
            <person name="de Pablos B."/>
            <person name="Modolell J."/>
            <person name="Peter A."/>
            <person name="Schoettler P."/>
            <person name="Werner M."/>
            <person name="Mourkioti F."/>
            <person name="Beinert N."/>
            <person name="Dowe G."/>
            <person name="Schaefer U."/>
            <person name="Jaeckle H."/>
            <person name="Bucheton A."/>
            <person name="Callister D.M."/>
            <person name="Campbell L.A."/>
            <person name="Darlamitsou A."/>
            <person name="Henderson N.S."/>
            <person name="McMillan P.J."/>
            <person name="Salles C."/>
            <person name="Tait E.A."/>
            <person name="Valenti P."/>
            <person name="Saunders R.D.C."/>
            <person name="Glover D.M."/>
        </authorList>
    </citation>
    <scope>NUCLEOTIDE SEQUENCE [LARGE SCALE GENOMIC DNA]</scope>
    <source>
        <strain>Oregon-R</strain>
    </source>
</reference>
<reference key="6">
    <citation type="journal article" date="2002" name="Genome Biol.">
        <title>A Drosophila full-length cDNA resource.</title>
        <authorList>
            <person name="Stapleton M."/>
            <person name="Carlson J.W."/>
            <person name="Brokstein P."/>
            <person name="Yu C."/>
            <person name="Champe M."/>
            <person name="George R.A."/>
            <person name="Guarin H."/>
            <person name="Kronmiller B."/>
            <person name="Pacleb J.M."/>
            <person name="Park S."/>
            <person name="Wan K.H."/>
            <person name="Rubin G.M."/>
            <person name="Celniker S.E."/>
        </authorList>
    </citation>
    <scope>NUCLEOTIDE SEQUENCE [LARGE SCALE MRNA]</scope>
    <source>
        <strain>Berkeley</strain>
        <tissue>Head</tissue>
    </source>
</reference>
<reference key="7">
    <citation type="journal article" date="2007" name="Mol. Biosyst.">
        <title>An integrated chemical, mass spectrometric and computational strategy for (quantitative) phosphoproteomics: application to Drosophila melanogaster Kc167 cells.</title>
        <authorList>
            <person name="Bodenmiller B."/>
            <person name="Mueller L.N."/>
            <person name="Pedrioli P.G.A."/>
            <person name="Pflieger D."/>
            <person name="Juenger M.A."/>
            <person name="Eng J.K."/>
            <person name="Aebersold R."/>
            <person name="Tao W.A."/>
        </authorList>
    </citation>
    <scope>PHOSPHORYLATION [LARGE SCALE ANALYSIS] AT SER-376</scope>
    <scope>IDENTIFICATION BY MASS SPECTROMETRY</scope>
</reference>
<feature type="chain" id="PRO_0000170962" description="Molybdenum cofactor synthesis protein cinnamon">
    <location>
        <begin position="1"/>
        <end position="601"/>
    </location>
</feature>
<feature type="region of interest" description="MPT adenylyltransferase">
    <location>
        <begin position="3"/>
        <end position="153"/>
    </location>
</feature>
<feature type="region of interest" description="Disordered" evidence="2">
    <location>
        <begin position="173"/>
        <end position="195"/>
    </location>
</feature>
<feature type="region of interest" description="MPT Mo-transferase">
    <location>
        <begin position="184"/>
        <end position="596"/>
    </location>
</feature>
<feature type="modified residue" description="Phosphoserine" evidence="4">
    <location>
        <position position="376"/>
    </location>
</feature>
<feature type="sequence conflict" description="In Ref. 1; AAA65877." evidence="5" ref="1">
    <original>S</original>
    <variation>T</variation>
    <location>
        <position position="414"/>
    </location>
</feature>
<sequence>MESITFGVLTISDTCWQEPEKDTSGPILRQLIGETFANTQVIGNIVPDEKDIIQQELRKWIDREELRVILTTGGTGFAPRDVTPEATRQLLEKECPQLSMYITLESIKQTQYAALSRGLCGIAGNTLILNLPGSEKAVKECFQTISALLPHAVHLIGDDVSLVRKTHAEVQGSAQKSHICPHKTGTGTDSDRNSPYPMLPVQEVLSIIFNTVQKTANLNKILLEMNAPVNIPPFRASIKDGYAMKSTGFSGTKRVLGCIAAGDSPNSLPLAEDECYKINTGAPLPLEADCVVQVEDTKLLQLDKNGQESLVDILVEPQAGLDVRPVGYDLSTNDRIFPALDPSPVVVKSLLASVGNRLILSKPKVAIVSTGSELCSPRNQLTPGKIFDSNTTMLTELLVYFGFNCMHTCVLSDSFQRTKESLLELFEVVDFVICSGGVSMGDKDFVKSVLEDLQFRIHCGRVNIKPGKPMTFASRKDKYFFGLPGNPVSAFVTFHLFALPAIRFAAGWDRCKCSLSVLNVKLLNDFSLDSRPEFVRASVISKSGELYASVNGNQISSRLQSIVGADVLINLPARTSDRPLAKAGEIFPASVLRFDFISKYE</sequence>
<name>CIN_DROME</name>
<gene>
    <name type="primary">cin</name>
    <name type="ORF">CG2945</name>
</gene>
<keyword id="KW-0067">ATP-binding</keyword>
<keyword id="KW-0460">Magnesium</keyword>
<keyword id="KW-0479">Metal-binding</keyword>
<keyword id="KW-0500">Molybdenum</keyword>
<keyword id="KW-0501">Molybdenum cofactor biosynthesis</keyword>
<keyword id="KW-0511">Multifunctional enzyme</keyword>
<keyword id="KW-0547">Nucleotide-binding</keyword>
<keyword id="KW-0597">Phosphoprotein</keyword>
<keyword id="KW-1185">Reference proteome</keyword>
<keyword id="KW-0808">Transferase</keyword>
<dbReference type="EC" id="2.7.7.75"/>
<dbReference type="EC" id="2.10.1.1"/>
<dbReference type="EMBL" id="L19876">
    <property type="protein sequence ID" value="AAA65877.1"/>
    <property type="molecule type" value="mRNA"/>
</dbReference>
<dbReference type="EMBL" id="AE014298">
    <property type="protein sequence ID" value="AAN09010.1"/>
    <property type="molecule type" value="Genomic_DNA"/>
</dbReference>
<dbReference type="EMBL" id="AL050231">
    <property type="protein sequence ID" value="CAB65851.1"/>
    <property type="status" value="ALT_SEQ"/>
    <property type="molecule type" value="Genomic_DNA"/>
</dbReference>
<dbReference type="EMBL" id="AL050231">
    <property type="protein sequence ID" value="CAB65852.1"/>
    <property type="molecule type" value="Genomic_DNA"/>
</dbReference>
<dbReference type="EMBL" id="AY069078">
    <property type="protein sequence ID" value="AAL39223.1"/>
    <property type="molecule type" value="mRNA"/>
</dbReference>
<dbReference type="PIR" id="S47896">
    <property type="entry name" value="S47896"/>
</dbReference>
<dbReference type="RefSeq" id="NP_477030.1">
    <property type="nucleotide sequence ID" value="NM_057682.4"/>
</dbReference>
<dbReference type="RefSeq" id="NP_726659.1">
    <property type="nucleotide sequence ID" value="NM_166835.4"/>
</dbReference>
<dbReference type="SMR" id="P39205"/>
<dbReference type="BioGRID" id="57547">
    <property type="interactions" value="3"/>
</dbReference>
<dbReference type="FunCoup" id="P39205">
    <property type="interactions" value="811"/>
</dbReference>
<dbReference type="STRING" id="7227.FBpp0070064"/>
<dbReference type="iPTMnet" id="P39205"/>
<dbReference type="PaxDb" id="7227-FBpp0070063"/>
<dbReference type="EnsemblMetazoa" id="FBtr0070064">
    <property type="protein sequence ID" value="FBpp0070063"/>
    <property type="gene ID" value="FBgn0000316"/>
</dbReference>
<dbReference type="EnsemblMetazoa" id="FBtr0070065">
    <property type="protein sequence ID" value="FBpp0070064"/>
    <property type="gene ID" value="FBgn0000316"/>
</dbReference>
<dbReference type="GeneID" id="30973"/>
<dbReference type="KEGG" id="dme:Dmel_CG2945"/>
<dbReference type="UCSC" id="CG2945-RA">
    <property type="organism name" value="d. melanogaster"/>
</dbReference>
<dbReference type="AGR" id="FB:FBgn0000316"/>
<dbReference type="CTD" id="30973"/>
<dbReference type="FlyBase" id="FBgn0000316">
    <property type="gene designation" value="cin"/>
</dbReference>
<dbReference type="VEuPathDB" id="VectorBase:FBgn0000316"/>
<dbReference type="eggNOG" id="KOG2371">
    <property type="taxonomic scope" value="Eukaryota"/>
</dbReference>
<dbReference type="GeneTree" id="ENSGT00390000016577"/>
<dbReference type="HOGENOM" id="CLU_010186_2_2_1"/>
<dbReference type="InParanoid" id="P39205"/>
<dbReference type="OMA" id="CFKINTG"/>
<dbReference type="OrthoDB" id="4349954at2759"/>
<dbReference type="PhylomeDB" id="P39205"/>
<dbReference type="Reactome" id="R-DME-947581">
    <property type="pathway name" value="Molybdenum cofactor biosynthesis"/>
</dbReference>
<dbReference type="UniPathway" id="UPA00344"/>
<dbReference type="BioGRID-ORCS" id="30973">
    <property type="hits" value="0 hits in 1 CRISPR screen"/>
</dbReference>
<dbReference type="ChiTaRS" id="cin">
    <property type="organism name" value="fly"/>
</dbReference>
<dbReference type="GenomeRNAi" id="30973"/>
<dbReference type="PRO" id="PR:P39205"/>
<dbReference type="Proteomes" id="UP000000803">
    <property type="component" value="Chromosome X"/>
</dbReference>
<dbReference type="Bgee" id="FBgn0000316">
    <property type="expression patterns" value="Expressed in adult enteroendocrine precursor cell in adult midgut (Drosophila) and 91 other cell types or tissues"/>
</dbReference>
<dbReference type="ExpressionAtlas" id="P39205">
    <property type="expression patterns" value="baseline and differential"/>
</dbReference>
<dbReference type="GO" id="GO:0005737">
    <property type="term" value="C:cytoplasm"/>
    <property type="evidence" value="ECO:0000318"/>
    <property type="project" value="GO_Central"/>
</dbReference>
<dbReference type="GO" id="GO:0005829">
    <property type="term" value="C:cytosol"/>
    <property type="evidence" value="ECO:0000318"/>
    <property type="project" value="GO_Central"/>
</dbReference>
<dbReference type="GO" id="GO:0030425">
    <property type="term" value="C:dendrite"/>
    <property type="evidence" value="ECO:0000318"/>
    <property type="project" value="GO_Central"/>
</dbReference>
<dbReference type="GO" id="GO:0045211">
    <property type="term" value="C:postsynaptic membrane"/>
    <property type="evidence" value="ECO:0000318"/>
    <property type="project" value="GO_Central"/>
</dbReference>
<dbReference type="GO" id="GO:0099572">
    <property type="term" value="C:postsynaptic specialization"/>
    <property type="evidence" value="ECO:0000318"/>
    <property type="project" value="GO_Central"/>
</dbReference>
<dbReference type="GO" id="GO:0005524">
    <property type="term" value="F:ATP binding"/>
    <property type="evidence" value="ECO:0007669"/>
    <property type="project" value="UniProtKB-KW"/>
</dbReference>
<dbReference type="GO" id="GO:0046872">
    <property type="term" value="F:metal ion binding"/>
    <property type="evidence" value="ECO:0007669"/>
    <property type="project" value="UniProtKB-KW"/>
</dbReference>
<dbReference type="GO" id="GO:0061598">
    <property type="term" value="F:molybdopterin adenylyltransferase activity"/>
    <property type="evidence" value="ECO:0000250"/>
    <property type="project" value="FlyBase"/>
</dbReference>
<dbReference type="GO" id="GO:0061599">
    <property type="term" value="F:molybdopterin molybdotransferase activity"/>
    <property type="evidence" value="ECO:0000318"/>
    <property type="project" value="GO_Central"/>
</dbReference>
<dbReference type="GO" id="GO:0007529">
    <property type="term" value="P:establishment of synaptic specificity at neuromuscular junction"/>
    <property type="evidence" value="ECO:0000318"/>
    <property type="project" value="GO_Central"/>
</dbReference>
<dbReference type="GO" id="GO:0097112">
    <property type="term" value="P:gamma-aminobutyric acid receptor clustering"/>
    <property type="evidence" value="ECO:0000318"/>
    <property type="project" value="GO_Central"/>
</dbReference>
<dbReference type="GO" id="GO:0072579">
    <property type="term" value="P:glycine receptor clustering"/>
    <property type="evidence" value="ECO:0000318"/>
    <property type="project" value="GO_Central"/>
</dbReference>
<dbReference type="GO" id="GO:0002121">
    <property type="term" value="P:inter-male aggressive behavior"/>
    <property type="evidence" value="ECO:0000315"/>
    <property type="project" value="FlyBase"/>
</dbReference>
<dbReference type="GO" id="GO:0006777">
    <property type="term" value="P:Mo-molybdopterin cofactor biosynthetic process"/>
    <property type="evidence" value="ECO:0000318"/>
    <property type="project" value="GO_Central"/>
</dbReference>
<dbReference type="GO" id="GO:0032324">
    <property type="term" value="P:molybdopterin cofactor biosynthetic process"/>
    <property type="evidence" value="ECO:0000315"/>
    <property type="project" value="FlyBase"/>
</dbReference>
<dbReference type="CDD" id="cd00887">
    <property type="entry name" value="MoeA"/>
    <property type="match status" value="1"/>
</dbReference>
<dbReference type="CDD" id="cd00886">
    <property type="entry name" value="MogA_MoaB"/>
    <property type="match status" value="1"/>
</dbReference>
<dbReference type="FunFam" id="2.170.190.11:FF:000010">
    <property type="entry name" value="Molybdopterin molybdenumtransferase"/>
    <property type="match status" value="1"/>
</dbReference>
<dbReference type="FunFam" id="2.40.340.10:FF:000007">
    <property type="entry name" value="Molybdopterin molybdenumtransferase"/>
    <property type="match status" value="1"/>
</dbReference>
<dbReference type="FunFam" id="3.40.980.10:FF:000004">
    <property type="entry name" value="Molybdopterin molybdenumtransferase"/>
    <property type="match status" value="1"/>
</dbReference>
<dbReference type="FunFam" id="3.40.980.10:FF:000017">
    <property type="entry name" value="Molybdopterin molybdenumtransferase"/>
    <property type="match status" value="1"/>
</dbReference>
<dbReference type="Gene3D" id="3.40.980.10">
    <property type="entry name" value="MoaB/Mog-like domain"/>
    <property type="match status" value="2"/>
</dbReference>
<dbReference type="Gene3D" id="2.40.340.10">
    <property type="entry name" value="MoeA, C-terminal, domain IV"/>
    <property type="match status" value="1"/>
</dbReference>
<dbReference type="Gene3D" id="3.90.105.10">
    <property type="entry name" value="Molybdopterin biosynthesis moea protein, domain 2"/>
    <property type="match status" value="1"/>
</dbReference>
<dbReference type="Gene3D" id="2.170.190.11">
    <property type="entry name" value="Molybdopterin biosynthesis moea protein, domain 3"/>
    <property type="match status" value="1"/>
</dbReference>
<dbReference type="InterPro" id="IPR036425">
    <property type="entry name" value="MoaB/Mog-like_dom_sf"/>
</dbReference>
<dbReference type="InterPro" id="IPR001453">
    <property type="entry name" value="MoaB/Mog_dom"/>
</dbReference>
<dbReference type="InterPro" id="IPR008284">
    <property type="entry name" value="MoCF_biosynth_CS"/>
</dbReference>
<dbReference type="InterPro" id="IPR038987">
    <property type="entry name" value="MoeA-like"/>
</dbReference>
<dbReference type="InterPro" id="IPR005111">
    <property type="entry name" value="MoeA_C_domain_IV"/>
</dbReference>
<dbReference type="InterPro" id="IPR036688">
    <property type="entry name" value="MoeA_C_domain_IV_sf"/>
</dbReference>
<dbReference type="InterPro" id="IPR005110">
    <property type="entry name" value="MoeA_linker/N"/>
</dbReference>
<dbReference type="InterPro" id="IPR036135">
    <property type="entry name" value="MoeA_linker/N_sf"/>
</dbReference>
<dbReference type="NCBIfam" id="TIGR00177">
    <property type="entry name" value="molyb_syn"/>
    <property type="match status" value="2"/>
</dbReference>
<dbReference type="PANTHER" id="PTHR10192:SF5">
    <property type="entry name" value="GEPHYRIN"/>
    <property type="match status" value="1"/>
</dbReference>
<dbReference type="PANTHER" id="PTHR10192">
    <property type="entry name" value="MOLYBDOPTERIN BIOSYNTHESIS PROTEIN"/>
    <property type="match status" value="1"/>
</dbReference>
<dbReference type="Pfam" id="PF00994">
    <property type="entry name" value="MoCF_biosynth"/>
    <property type="match status" value="2"/>
</dbReference>
<dbReference type="Pfam" id="PF03454">
    <property type="entry name" value="MoeA_C"/>
    <property type="match status" value="1"/>
</dbReference>
<dbReference type="Pfam" id="PF03453">
    <property type="entry name" value="MoeA_N"/>
    <property type="match status" value="1"/>
</dbReference>
<dbReference type="SMART" id="SM00852">
    <property type="entry name" value="MoCF_biosynth"/>
    <property type="match status" value="2"/>
</dbReference>
<dbReference type="SUPFAM" id="SSF63867">
    <property type="entry name" value="MoeA C-terminal domain-like"/>
    <property type="match status" value="1"/>
</dbReference>
<dbReference type="SUPFAM" id="SSF63882">
    <property type="entry name" value="MoeA N-terminal region -like"/>
    <property type="match status" value="1"/>
</dbReference>
<dbReference type="SUPFAM" id="SSF53218">
    <property type="entry name" value="Molybdenum cofactor biosynthesis proteins"/>
    <property type="match status" value="2"/>
</dbReference>
<dbReference type="PROSITE" id="PS01078">
    <property type="entry name" value="MOCF_BIOSYNTHESIS_1"/>
    <property type="match status" value="1"/>
</dbReference>
<dbReference type="PROSITE" id="PS01079">
    <property type="entry name" value="MOCF_BIOSYNTHESIS_2"/>
    <property type="match status" value="1"/>
</dbReference>
<accession>P39205</accession>
<accession>Q0KHX9</accession>
<accession>Q9U1M0</accession>
<accession>Q9V3E2</accession>
<evidence type="ECO:0000250" key="1"/>
<evidence type="ECO:0000256" key="2">
    <source>
        <dbReference type="SAM" id="MobiDB-lite"/>
    </source>
</evidence>
<evidence type="ECO:0000269" key="3">
    <source>
    </source>
</evidence>
<evidence type="ECO:0000269" key="4">
    <source>
    </source>
</evidence>
<evidence type="ECO:0000305" key="5"/>
<protein>
    <recommendedName>
        <fullName>Molybdenum cofactor synthesis protein cinnamon</fullName>
    </recommendedName>
    <domain>
        <recommendedName>
            <fullName>Molybdopterin adenylyltransferase</fullName>
            <shortName>MPT adenylyltransferase</shortName>
            <ecNumber>2.7.7.75</ecNumber>
        </recommendedName>
        <alternativeName>
            <fullName>Domain G</fullName>
        </alternativeName>
    </domain>
    <domain>
        <recommendedName>
            <fullName>Molybdopterin molybdenumtransferase</fullName>
            <shortName>MPT Mo-transferase</shortName>
            <ecNumber>2.10.1.1</ecNumber>
        </recommendedName>
        <alternativeName>
            <fullName>Domain E</fullName>
        </alternativeName>
    </domain>
</protein>
<comment type="function">
    <text evidence="3">Catalyzes two steps in the biosynthesis of the molybdenum cofactor. In the first step, molybdopterin is adenylated. Subsequently, molybdate is inserted into adenylated molybdopterin and AMP is released.</text>
</comment>
<comment type="catalytic activity">
    <reaction>
        <text>molybdopterin + ATP + H(+) = adenylyl-molybdopterin + diphosphate</text>
        <dbReference type="Rhea" id="RHEA:31331"/>
        <dbReference type="ChEBI" id="CHEBI:15378"/>
        <dbReference type="ChEBI" id="CHEBI:30616"/>
        <dbReference type="ChEBI" id="CHEBI:33019"/>
        <dbReference type="ChEBI" id="CHEBI:58698"/>
        <dbReference type="ChEBI" id="CHEBI:62727"/>
        <dbReference type="EC" id="2.7.7.75"/>
    </reaction>
</comment>
<comment type="catalytic activity">
    <reaction>
        <text>adenylyl-molybdopterin + molybdate = Mo-molybdopterin + AMP + H(+)</text>
        <dbReference type="Rhea" id="RHEA:35047"/>
        <dbReference type="ChEBI" id="CHEBI:15378"/>
        <dbReference type="ChEBI" id="CHEBI:36264"/>
        <dbReference type="ChEBI" id="CHEBI:62727"/>
        <dbReference type="ChEBI" id="CHEBI:71302"/>
        <dbReference type="ChEBI" id="CHEBI:456215"/>
        <dbReference type="EC" id="2.10.1.1"/>
    </reaction>
</comment>
<comment type="cofactor">
    <cofactor evidence="1">
        <name>Mg(2+)</name>
        <dbReference type="ChEBI" id="CHEBI:18420"/>
    </cofactor>
</comment>
<comment type="pathway">
    <text>Cofactor biosynthesis; molybdopterin biosynthesis.</text>
</comment>
<comment type="developmental stage">
    <text evidence="3">Detected primarily in the epidermal cells of the segmental grooves during germ-band retraction (7-9 hours after egg laying).</text>
</comment>
<comment type="similarity">
    <text evidence="5">In the N-terminal section; belongs to the MoaB/Mog family.</text>
</comment>
<comment type="similarity">
    <text evidence="5">In the C-terminal section; belongs to the MoeA family.</text>
</comment>
<organism>
    <name type="scientific">Drosophila melanogaster</name>
    <name type="common">Fruit fly</name>
    <dbReference type="NCBI Taxonomy" id="7227"/>
    <lineage>
        <taxon>Eukaryota</taxon>
        <taxon>Metazoa</taxon>
        <taxon>Ecdysozoa</taxon>
        <taxon>Arthropoda</taxon>
        <taxon>Hexapoda</taxon>
        <taxon>Insecta</taxon>
        <taxon>Pterygota</taxon>
        <taxon>Neoptera</taxon>
        <taxon>Endopterygota</taxon>
        <taxon>Diptera</taxon>
        <taxon>Brachycera</taxon>
        <taxon>Muscomorpha</taxon>
        <taxon>Ephydroidea</taxon>
        <taxon>Drosophilidae</taxon>
        <taxon>Drosophila</taxon>
        <taxon>Sophophora</taxon>
    </lineage>
</organism>
<proteinExistence type="evidence at protein level"/>